<comment type="similarity">
    <text evidence="1">Belongs to the UPF0301 (AlgH) family.</text>
</comment>
<gene>
    <name type="ordered locus">RHECIAT_CH0001061</name>
</gene>
<sequence>MSLSTLKNRRERGFFDGQFLIAMPGMEDRNFARTVIYICAHSDAGAMGFVINRPQSLTFTDVLLHLDMIKQEEPIVLPQRARDFPIQTGGPVESGRGFVLHSDDYASDSSIPVSDDICLTATLDIVRAISKGAGPKRATMLLGYSSWGAGQLENEVANNGWLTCPANEELIFDRSLEDKYERALAGMGVTAAMLSAEAGHA</sequence>
<reference key="1">
    <citation type="journal article" date="2010" name="Appl. Environ. Microbiol.">
        <title>Conserved symbiotic plasmid DNA sequences in the multireplicon pangenomic structure of Rhizobium etli.</title>
        <authorList>
            <person name="Gonzalez V."/>
            <person name="Acosta J.L."/>
            <person name="Santamaria R.I."/>
            <person name="Bustos P."/>
            <person name="Fernandez J.L."/>
            <person name="Hernandez Gonzalez I.L."/>
            <person name="Diaz R."/>
            <person name="Flores M."/>
            <person name="Palacios R."/>
            <person name="Mora J."/>
            <person name="Davila G."/>
        </authorList>
    </citation>
    <scope>NUCLEOTIDE SEQUENCE [LARGE SCALE GENOMIC DNA]</scope>
    <source>
        <strain>CIAT 652</strain>
    </source>
</reference>
<organism>
    <name type="scientific">Rhizobium etli (strain CIAT 652)</name>
    <dbReference type="NCBI Taxonomy" id="491916"/>
    <lineage>
        <taxon>Bacteria</taxon>
        <taxon>Pseudomonadati</taxon>
        <taxon>Pseudomonadota</taxon>
        <taxon>Alphaproteobacteria</taxon>
        <taxon>Hyphomicrobiales</taxon>
        <taxon>Rhizobiaceae</taxon>
        <taxon>Rhizobium/Agrobacterium group</taxon>
        <taxon>Rhizobium</taxon>
    </lineage>
</organism>
<accession>B3PSC4</accession>
<dbReference type="EMBL" id="CP001074">
    <property type="protein sequence ID" value="ACE90046.1"/>
    <property type="molecule type" value="Genomic_DNA"/>
</dbReference>
<dbReference type="SMR" id="B3PSC4"/>
<dbReference type="KEGG" id="rec:RHECIAT_CH0001061"/>
<dbReference type="eggNOG" id="COG1678">
    <property type="taxonomic scope" value="Bacteria"/>
</dbReference>
<dbReference type="HOGENOM" id="CLU_057596_1_0_5"/>
<dbReference type="Proteomes" id="UP000008817">
    <property type="component" value="Chromosome"/>
</dbReference>
<dbReference type="GO" id="GO:0005829">
    <property type="term" value="C:cytosol"/>
    <property type="evidence" value="ECO:0007669"/>
    <property type="project" value="TreeGrafter"/>
</dbReference>
<dbReference type="Gene3D" id="3.40.1740.10">
    <property type="entry name" value="VC0467-like"/>
    <property type="match status" value="1"/>
</dbReference>
<dbReference type="HAMAP" id="MF_00758">
    <property type="entry name" value="UPF0301"/>
    <property type="match status" value="1"/>
</dbReference>
<dbReference type="InterPro" id="IPR003774">
    <property type="entry name" value="AlgH-like"/>
</dbReference>
<dbReference type="NCBIfam" id="NF001268">
    <property type="entry name" value="PRK00228.1-4"/>
    <property type="match status" value="1"/>
</dbReference>
<dbReference type="PANTHER" id="PTHR30327">
    <property type="entry name" value="UNCHARACTERIZED PROTEIN YQGE"/>
    <property type="match status" value="1"/>
</dbReference>
<dbReference type="PANTHER" id="PTHR30327:SF1">
    <property type="entry name" value="UPF0301 PROTEIN YQGE"/>
    <property type="match status" value="1"/>
</dbReference>
<dbReference type="Pfam" id="PF02622">
    <property type="entry name" value="DUF179"/>
    <property type="match status" value="1"/>
</dbReference>
<dbReference type="SUPFAM" id="SSF143456">
    <property type="entry name" value="VC0467-like"/>
    <property type="match status" value="1"/>
</dbReference>
<protein>
    <recommendedName>
        <fullName evidence="1">UPF0301 protein RHECIAT_CH0001061</fullName>
    </recommendedName>
</protein>
<feature type="chain" id="PRO_1000198289" description="UPF0301 protein RHECIAT_CH0001061">
    <location>
        <begin position="1"/>
        <end position="201"/>
    </location>
</feature>
<name>Y1061_RHIE6</name>
<proteinExistence type="inferred from homology"/>
<evidence type="ECO:0000255" key="1">
    <source>
        <dbReference type="HAMAP-Rule" id="MF_00758"/>
    </source>
</evidence>